<gene>
    <name evidence="1" type="primary">truB</name>
    <name type="ordered locus">BCE33L3569</name>
</gene>
<proteinExistence type="inferred from homology"/>
<reference key="1">
    <citation type="journal article" date="2006" name="J. Bacteriol.">
        <title>Pathogenomic sequence analysis of Bacillus cereus and Bacillus thuringiensis isolates closely related to Bacillus anthracis.</title>
        <authorList>
            <person name="Han C.S."/>
            <person name="Xie G."/>
            <person name="Challacombe J.F."/>
            <person name="Altherr M.R."/>
            <person name="Bhotika S.S."/>
            <person name="Bruce D."/>
            <person name="Campbell C.S."/>
            <person name="Campbell M.L."/>
            <person name="Chen J."/>
            <person name="Chertkov O."/>
            <person name="Cleland C."/>
            <person name="Dimitrijevic M."/>
            <person name="Doggett N.A."/>
            <person name="Fawcett J.J."/>
            <person name="Glavina T."/>
            <person name="Goodwin L.A."/>
            <person name="Hill K.K."/>
            <person name="Hitchcock P."/>
            <person name="Jackson P.J."/>
            <person name="Keim P."/>
            <person name="Kewalramani A.R."/>
            <person name="Longmire J."/>
            <person name="Lucas S."/>
            <person name="Malfatti S."/>
            <person name="McMurry K."/>
            <person name="Meincke L.J."/>
            <person name="Misra M."/>
            <person name="Moseman B.L."/>
            <person name="Mundt M."/>
            <person name="Munk A.C."/>
            <person name="Okinaka R.T."/>
            <person name="Parson-Quintana B."/>
            <person name="Reilly L.P."/>
            <person name="Richardson P."/>
            <person name="Robinson D.L."/>
            <person name="Rubin E."/>
            <person name="Saunders E."/>
            <person name="Tapia R."/>
            <person name="Tesmer J.G."/>
            <person name="Thayer N."/>
            <person name="Thompson L.S."/>
            <person name="Tice H."/>
            <person name="Ticknor L.O."/>
            <person name="Wills P.L."/>
            <person name="Brettin T.S."/>
            <person name="Gilna P."/>
        </authorList>
    </citation>
    <scope>NUCLEOTIDE SEQUENCE [LARGE SCALE GENOMIC DNA]</scope>
    <source>
        <strain>ZK / E33L</strain>
    </source>
</reference>
<feature type="chain" id="PRO_0000121786" description="tRNA pseudouridine synthase B">
    <location>
        <begin position="1"/>
        <end position="307"/>
    </location>
</feature>
<feature type="active site" description="Nucleophile" evidence="1">
    <location>
        <position position="38"/>
    </location>
</feature>
<sequence>MEGVVLLHKPKGMTSHDCVFKLRKILREKRIGHTGTLDPDVTGVLPICVGRATKIAQFLTSETKTYEGEVTLGFSTTTEDASGEVVETKHVDRVITRKEVEEALVTLTGTIEQMPPMFSAVKVNGKKLYEYARAGQEVERPVRTITIHEFVLLDDREVFEGETISFRFRVTCSKGTYVRTLAVMIGEKLGFPSHMSHLVRTASGEFLLEDCISFEEIEENVQNGTVESIFISIDEALSKFPKMVVDEKQAEKIKNGMFLKNELQITAPFITVFDKNDRCLAIYEHHPKHPGMLKPMKVLVNNQELKL</sequence>
<organism>
    <name type="scientific">Bacillus cereus (strain ZK / E33L)</name>
    <dbReference type="NCBI Taxonomy" id="288681"/>
    <lineage>
        <taxon>Bacteria</taxon>
        <taxon>Bacillati</taxon>
        <taxon>Bacillota</taxon>
        <taxon>Bacilli</taxon>
        <taxon>Bacillales</taxon>
        <taxon>Bacillaceae</taxon>
        <taxon>Bacillus</taxon>
        <taxon>Bacillus cereus group</taxon>
    </lineage>
</organism>
<accession>Q636L6</accession>
<comment type="function">
    <text evidence="1">Responsible for synthesis of pseudouridine from uracil-55 in the psi GC loop of transfer RNAs.</text>
</comment>
<comment type="catalytic activity">
    <reaction evidence="1">
        <text>uridine(55) in tRNA = pseudouridine(55) in tRNA</text>
        <dbReference type="Rhea" id="RHEA:42532"/>
        <dbReference type="Rhea" id="RHEA-COMP:10101"/>
        <dbReference type="Rhea" id="RHEA-COMP:10102"/>
        <dbReference type="ChEBI" id="CHEBI:65314"/>
        <dbReference type="ChEBI" id="CHEBI:65315"/>
        <dbReference type="EC" id="5.4.99.25"/>
    </reaction>
</comment>
<comment type="similarity">
    <text evidence="1">Belongs to the pseudouridine synthase TruB family. Type 1 subfamily.</text>
</comment>
<name>TRUB_BACCZ</name>
<dbReference type="EC" id="5.4.99.25" evidence="1"/>
<dbReference type="EMBL" id="CP000001">
    <property type="protein sequence ID" value="AAU16696.1"/>
    <property type="molecule type" value="Genomic_DNA"/>
</dbReference>
<dbReference type="RefSeq" id="WP_000399339.1">
    <property type="nucleotide sequence ID" value="NC_006274.1"/>
</dbReference>
<dbReference type="SMR" id="Q636L6"/>
<dbReference type="KEGG" id="bcz:BCE33L3569"/>
<dbReference type="PATRIC" id="fig|288681.22.peg.1842"/>
<dbReference type="Proteomes" id="UP000002612">
    <property type="component" value="Chromosome"/>
</dbReference>
<dbReference type="GO" id="GO:0003723">
    <property type="term" value="F:RNA binding"/>
    <property type="evidence" value="ECO:0007669"/>
    <property type="project" value="InterPro"/>
</dbReference>
<dbReference type="GO" id="GO:0160148">
    <property type="term" value="F:tRNA pseudouridine(55) synthase activity"/>
    <property type="evidence" value="ECO:0007669"/>
    <property type="project" value="UniProtKB-EC"/>
</dbReference>
<dbReference type="GO" id="GO:1990481">
    <property type="term" value="P:mRNA pseudouridine synthesis"/>
    <property type="evidence" value="ECO:0007669"/>
    <property type="project" value="TreeGrafter"/>
</dbReference>
<dbReference type="GO" id="GO:0031119">
    <property type="term" value="P:tRNA pseudouridine synthesis"/>
    <property type="evidence" value="ECO:0007669"/>
    <property type="project" value="UniProtKB-UniRule"/>
</dbReference>
<dbReference type="CDD" id="cd02573">
    <property type="entry name" value="PseudoU_synth_EcTruB"/>
    <property type="match status" value="1"/>
</dbReference>
<dbReference type="FunFam" id="3.30.2350.10:FF:000011">
    <property type="entry name" value="tRNA pseudouridine synthase B"/>
    <property type="match status" value="1"/>
</dbReference>
<dbReference type="Gene3D" id="3.30.2350.10">
    <property type="entry name" value="Pseudouridine synthase"/>
    <property type="match status" value="1"/>
</dbReference>
<dbReference type="HAMAP" id="MF_01080">
    <property type="entry name" value="TruB_bact"/>
    <property type="match status" value="1"/>
</dbReference>
<dbReference type="InterPro" id="IPR020103">
    <property type="entry name" value="PsdUridine_synth_cat_dom_sf"/>
</dbReference>
<dbReference type="InterPro" id="IPR002501">
    <property type="entry name" value="PsdUridine_synth_N"/>
</dbReference>
<dbReference type="InterPro" id="IPR014780">
    <property type="entry name" value="tRNA_psdUridine_synth_TruB"/>
</dbReference>
<dbReference type="InterPro" id="IPR032819">
    <property type="entry name" value="TruB_C"/>
</dbReference>
<dbReference type="NCBIfam" id="TIGR00431">
    <property type="entry name" value="TruB"/>
    <property type="match status" value="1"/>
</dbReference>
<dbReference type="PANTHER" id="PTHR13767:SF2">
    <property type="entry name" value="PSEUDOURIDYLATE SYNTHASE TRUB1"/>
    <property type="match status" value="1"/>
</dbReference>
<dbReference type="PANTHER" id="PTHR13767">
    <property type="entry name" value="TRNA-PSEUDOURIDINE SYNTHASE"/>
    <property type="match status" value="1"/>
</dbReference>
<dbReference type="Pfam" id="PF16198">
    <property type="entry name" value="TruB_C_2"/>
    <property type="match status" value="1"/>
</dbReference>
<dbReference type="Pfam" id="PF01509">
    <property type="entry name" value="TruB_N"/>
    <property type="match status" value="1"/>
</dbReference>
<dbReference type="SUPFAM" id="SSF55120">
    <property type="entry name" value="Pseudouridine synthase"/>
    <property type="match status" value="1"/>
</dbReference>
<keyword id="KW-0413">Isomerase</keyword>
<keyword id="KW-0819">tRNA processing</keyword>
<protein>
    <recommendedName>
        <fullName evidence="1">tRNA pseudouridine synthase B</fullName>
        <ecNumber evidence="1">5.4.99.25</ecNumber>
    </recommendedName>
    <alternativeName>
        <fullName evidence="1">tRNA pseudouridine(55) synthase</fullName>
        <shortName evidence="1">Psi55 synthase</shortName>
    </alternativeName>
    <alternativeName>
        <fullName evidence="1">tRNA pseudouridylate synthase</fullName>
    </alternativeName>
    <alternativeName>
        <fullName evidence="1">tRNA-uridine isomerase</fullName>
    </alternativeName>
</protein>
<evidence type="ECO:0000255" key="1">
    <source>
        <dbReference type="HAMAP-Rule" id="MF_01080"/>
    </source>
</evidence>